<proteinExistence type="inferred from homology"/>
<feature type="chain" id="PRO_1000187361" description="Methylthioribose-1-phosphate isomerase">
    <location>
        <begin position="1"/>
        <end position="342"/>
    </location>
</feature>
<feature type="active site" description="Proton donor" evidence="1">
    <location>
        <position position="228"/>
    </location>
</feature>
<feature type="binding site" evidence="1">
    <location>
        <begin position="49"/>
        <end position="51"/>
    </location>
    <ligand>
        <name>substrate</name>
    </ligand>
</feature>
<feature type="binding site" evidence="1">
    <location>
        <position position="86"/>
    </location>
    <ligand>
        <name>substrate</name>
    </ligand>
</feature>
<feature type="binding site" evidence="1">
    <location>
        <position position="187"/>
    </location>
    <ligand>
        <name>substrate</name>
    </ligand>
</feature>
<feature type="binding site" evidence="1">
    <location>
        <begin position="238"/>
        <end position="239"/>
    </location>
    <ligand>
        <name>substrate</name>
    </ligand>
</feature>
<feature type="site" description="Transition state stabilizer" evidence="1">
    <location>
        <position position="148"/>
    </location>
</feature>
<sequence>MQTLQTTSLRVSENQLFILDQQALPQEKRWLAADNVALLVDHIHALRVRGAPLIGLSASLLLALLAQRGLNRDALQQALETLRAARPTAVNLMNNLDRMKQALAREDYPQALEAEALRLVEEDKQLCDRIAEAGSALVKPGSRLLTHCNTGGLATAGVGTALGVIALAHRQGKVANVWVDETRPLLQGGRLTAWELGELGVPYQLITDSMAASLMAQGQVDAVWVGADRIAANGDVANKIGTYSLAVLAHYHQIPFYVAAPQTTLDRYCPNGAAIPIEQRAAAEVTGVAGSFGAVQWAPMGAAVYNPAFDVTPAGLVSGWVLDSGVVTPAQVAAGAFAPDNG</sequence>
<name>MTNA_KLEP3</name>
<dbReference type="EC" id="5.3.1.23" evidence="1"/>
<dbReference type="EMBL" id="CP000964">
    <property type="protein sequence ID" value="ACI10456.1"/>
    <property type="molecule type" value="Genomic_DNA"/>
</dbReference>
<dbReference type="SMR" id="B5XZW2"/>
<dbReference type="KEGG" id="kpe:KPK_3949"/>
<dbReference type="HOGENOM" id="CLU_016218_1_2_6"/>
<dbReference type="BioCyc" id="MetaCyc:MONOMER-1341"/>
<dbReference type="UniPathway" id="UPA00904">
    <property type="reaction ID" value="UER00874"/>
</dbReference>
<dbReference type="Proteomes" id="UP000001734">
    <property type="component" value="Chromosome"/>
</dbReference>
<dbReference type="GO" id="GO:0046523">
    <property type="term" value="F:S-methyl-5-thioribose-1-phosphate isomerase activity"/>
    <property type="evidence" value="ECO:0007669"/>
    <property type="project" value="UniProtKB-UniRule"/>
</dbReference>
<dbReference type="GO" id="GO:0019509">
    <property type="term" value="P:L-methionine salvage from methylthioadenosine"/>
    <property type="evidence" value="ECO:0007669"/>
    <property type="project" value="UniProtKB-UniRule"/>
</dbReference>
<dbReference type="FunFam" id="3.40.50.10470:FF:000006">
    <property type="entry name" value="Methylthioribose-1-phosphate isomerase"/>
    <property type="match status" value="1"/>
</dbReference>
<dbReference type="Gene3D" id="1.20.120.420">
    <property type="entry name" value="translation initiation factor eif-2b, domain 1"/>
    <property type="match status" value="1"/>
</dbReference>
<dbReference type="Gene3D" id="3.40.50.10470">
    <property type="entry name" value="Translation initiation factor eif-2b, domain 2"/>
    <property type="match status" value="1"/>
</dbReference>
<dbReference type="HAMAP" id="MF_01678">
    <property type="entry name" value="Salvage_MtnA"/>
    <property type="match status" value="1"/>
</dbReference>
<dbReference type="InterPro" id="IPR000649">
    <property type="entry name" value="IF-2B-related"/>
</dbReference>
<dbReference type="InterPro" id="IPR005251">
    <property type="entry name" value="IF-M1Pi"/>
</dbReference>
<dbReference type="InterPro" id="IPR042529">
    <property type="entry name" value="IF_2B-like_C"/>
</dbReference>
<dbReference type="InterPro" id="IPR011559">
    <property type="entry name" value="Initiation_fac_2B_a/b/d"/>
</dbReference>
<dbReference type="InterPro" id="IPR027363">
    <property type="entry name" value="M1Pi_N"/>
</dbReference>
<dbReference type="InterPro" id="IPR037171">
    <property type="entry name" value="NagB/RpiA_transferase-like"/>
</dbReference>
<dbReference type="NCBIfam" id="TIGR00524">
    <property type="entry name" value="eIF-2B_rel"/>
    <property type="match status" value="1"/>
</dbReference>
<dbReference type="NCBIfam" id="NF004326">
    <property type="entry name" value="PRK05720.1"/>
    <property type="match status" value="1"/>
</dbReference>
<dbReference type="NCBIfam" id="TIGR00512">
    <property type="entry name" value="salvage_mtnA"/>
    <property type="match status" value="1"/>
</dbReference>
<dbReference type="PANTHER" id="PTHR43475">
    <property type="entry name" value="METHYLTHIORIBOSE-1-PHOSPHATE ISOMERASE"/>
    <property type="match status" value="1"/>
</dbReference>
<dbReference type="PANTHER" id="PTHR43475:SF1">
    <property type="entry name" value="METHYLTHIORIBOSE-1-PHOSPHATE ISOMERASE"/>
    <property type="match status" value="1"/>
</dbReference>
<dbReference type="Pfam" id="PF01008">
    <property type="entry name" value="IF-2B"/>
    <property type="match status" value="1"/>
</dbReference>
<dbReference type="SUPFAM" id="SSF100950">
    <property type="entry name" value="NagB/RpiA/CoA transferase-like"/>
    <property type="match status" value="1"/>
</dbReference>
<comment type="function">
    <text evidence="1">Catalyzes the interconversion of methylthioribose-1-phosphate (MTR-1-P) into methylthioribulose-1-phosphate (MTRu-1-P).</text>
</comment>
<comment type="catalytic activity">
    <reaction evidence="1">
        <text>5-(methylsulfanyl)-alpha-D-ribose 1-phosphate = 5-(methylsulfanyl)-D-ribulose 1-phosphate</text>
        <dbReference type="Rhea" id="RHEA:19989"/>
        <dbReference type="ChEBI" id="CHEBI:58533"/>
        <dbReference type="ChEBI" id="CHEBI:58548"/>
        <dbReference type="EC" id="5.3.1.23"/>
    </reaction>
</comment>
<comment type="pathway">
    <text evidence="1">Amino-acid biosynthesis; L-methionine biosynthesis via salvage pathway; L-methionine from S-methyl-5-thio-alpha-D-ribose 1-phosphate: step 1/6.</text>
</comment>
<comment type="similarity">
    <text evidence="2">Belongs to the eIF-2B alpha/beta/delta subunits family. MtnA subfamily.</text>
</comment>
<accession>B5XZW2</accession>
<protein>
    <recommendedName>
        <fullName evidence="1">Methylthioribose-1-phosphate isomerase</fullName>
        <shortName evidence="1">M1Pi</shortName>
        <shortName evidence="1">MTR-1-P isomerase</shortName>
        <ecNumber evidence="1">5.3.1.23</ecNumber>
    </recommendedName>
    <alternativeName>
        <fullName evidence="1">S-methyl-5-thioribose-1-phosphate isomerase</fullName>
    </alternativeName>
</protein>
<keyword id="KW-0028">Amino-acid biosynthesis</keyword>
<keyword id="KW-0413">Isomerase</keyword>
<keyword id="KW-0486">Methionine biosynthesis</keyword>
<reference key="1">
    <citation type="journal article" date="2008" name="PLoS Genet.">
        <title>Complete genome sequence of the N2-fixing broad host range endophyte Klebsiella pneumoniae 342 and virulence predictions verified in mice.</title>
        <authorList>
            <person name="Fouts D.E."/>
            <person name="Tyler H.L."/>
            <person name="DeBoy R.T."/>
            <person name="Daugherty S."/>
            <person name="Ren Q."/>
            <person name="Badger J.H."/>
            <person name="Durkin A.S."/>
            <person name="Huot H."/>
            <person name="Shrivastava S."/>
            <person name="Kothari S."/>
            <person name="Dodson R.J."/>
            <person name="Mohamoud Y."/>
            <person name="Khouri H."/>
            <person name="Roesch L.F.W."/>
            <person name="Krogfelt K.A."/>
            <person name="Struve C."/>
            <person name="Triplett E.W."/>
            <person name="Methe B.A."/>
        </authorList>
    </citation>
    <scope>NUCLEOTIDE SEQUENCE [LARGE SCALE GENOMIC DNA]</scope>
    <source>
        <strain>342</strain>
    </source>
</reference>
<evidence type="ECO:0000255" key="1">
    <source>
        <dbReference type="HAMAP-Rule" id="MF_01678"/>
    </source>
</evidence>
<evidence type="ECO:0000305" key="2"/>
<organism>
    <name type="scientific">Klebsiella pneumoniae (strain 342)</name>
    <dbReference type="NCBI Taxonomy" id="507522"/>
    <lineage>
        <taxon>Bacteria</taxon>
        <taxon>Pseudomonadati</taxon>
        <taxon>Pseudomonadota</taxon>
        <taxon>Gammaproteobacteria</taxon>
        <taxon>Enterobacterales</taxon>
        <taxon>Enterobacteriaceae</taxon>
        <taxon>Klebsiella/Raoultella group</taxon>
        <taxon>Klebsiella</taxon>
        <taxon>Klebsiella pneumoniae complex</taxon>
    </lineage>
</organism>
<gene>
    <name evidence="1" type="primary">mtnA</name>
    <name type="ordered locus">KPK_3949</name>
</gene>